<dbReference type="EC" id="3.1.1.96" evidence="1"/>
<dbReference type="EMBL" id="CP000863">
    <property type="protein sequence ID" value="ACC58892.1"/>
    <property type="molecule type" value="Genomic_DNA"/>
</dbReference>
<dbReference type="RefSeq" id="WP_001202018.1">
    <property type="nucleotide sequence ID" value="NZ_CP031380.1"/>
</dbReference>
<dbReference type="SMR" id="B2I1P4"/>
<dbReference type="GeneID" id="92895625"/>
<dbReference type="KEGG" id="abc:ACICU_03583"/>
<dbReference type="HOGENOM" id="CLU_076901_1_1_6"/>
<dbReference type="Proteomes" id="UP000008839">
    <property type="component" value="Chromosome"/>
</dbReference>
<dbReference type="GO" id="GO:0005737">
    <property type="term" value="C:cytoplasm"/>
    <property type="evidence" value="ECO:0007669"/>
    <property type="project" value="UniProtKB-SubCell"/>
</dbReference>
<dbReference type="GO" id="GO:0051500">
    <property type="term" value="F:D-tyrosyl-tRNA(Tyr) deacylase activity"/>
    <property type="evidence" value="ECO:0007669"/>
    <property type="project" value="TreeGrafter"/>
</dbReference>
<dbReference type="GO" id="GO:0106026">
    <property type="term" value="F:Gly-tRNA(Ala) deacylase activity"/>
    <property type="evidence" value="ECO:0007669"/>
    <property type="project" value="UniProtKB-UniRule"/>
</dbReference>
<dbReference type="GO" id="GO:0043908">
    <property type="term" value="F:Ser(Gly)-tRNA(Ala) hydrolase activity"/>
    <property type="evidence" value="ECO:0007669"/>
    <property type="project" value="UniProtKB-UniRule"/>
</dbReference>
<dbReference type="GO" id="GO:0000049">
    <property type="term" value="F:tRNA binding"/>
    <property type="evidence" value="ECO:0007669"/>
    <property type="project" value="UniProtKB-UniRule"/>
</dbReference>
<dbReference type="GO" id="GO:0019478">
    <property type="term" value="P:D-amino acid catabolic process"/>
    <property type="evidence" value="ECO:0007669"/>
    <property type="project" value="UniProtKB-UniRule"/>
</dbReference>
<dbReference type="CDD" id="cd00563">
    <property type="entry name" value="Dtyr_deacylase"/>
    <property type="match status" value="1"/>
</dbReference>
<dbReference type="FunFam" id="3.50.80.10:FF:000001">
    <property type="entry name" value="D-aminoacyl-tRNA deacylase"/>
    <property type="match status" value="1"/>
</dbReference>
<dbReference type="Gene3D" id="3.50.80.10">
    <property type="entry name" value="D-tyrosyl-tRNA(Tyr) deacylase"/>
    <property type="match status" value="1"/>
</dbReference>
<dbReference type="HAMAP" id="MF_00518">
    <property type="entry name" value="Deacylase_Dtd"/>
    <property type="match status" value="1"/>
</dbReference>
<dbReference type="InterPro" id="IPR003732">
    <property type="entry name" value="Daa-tRNA_deacyls_DTD"/>
</dbReference>
<dbReference type="InterPro" id="IPR023509">
    <property type="entry name" value="DTD-like_sf"/>
</dbReference>
<dbReference type="NCBIfam" id="TIGR00256">
    <property type="entry name" value="D-aminoacyl-tRNA deacylase"/>
    <property type="match status" value="1"/>
</dbReference>
<dbReference type="PANTHER" id="PTHR10472:SF5">
    <property type="entry name" value="D-AMINOACYL-TRNA DEACYLASE 1"/>
    <property type="match status" value="1"/>
</dbReference>
<dbReference type="PANTHER" id="PTHR10472">
    <property type="entry name" value="D-TYROSYL-TRNA TYR DEACYLASE"/>
    <property type="match status" value="1"/>
</dbReference>
<dbReference type="Pfam" id="PF02580">
    <property type="entry name" value="Tyr_Deacylase"/>
    <property type="match status" value="1"/>
</dbReference>
<dbReference type="SUPFAM" id="SSF69500">
    <property type="entry name" value="DTD-like"/>
    <property type="match status" value="1"/>
</dbReference>
<accession>B2I1P4</accession>
<keyword id="KW-0963">Cytoplasm</keyword>
<keyword id="KW-0378">Hydrolase</keyword>
<keyword id="KW-0694">RNA-binding</keyword>
<keyword id="KW-0820">tRNA-binding</keyword>
<protein>
    <recommendedName>
        <fullName evidence="1">D-aminoacyl-tRNA deacylase</fullName>
        <shortName evidence="1">DTD</shortName>
        <ecNumber evidence="1">3.1.1.96</ecNumber>
    </recommendedName>
    <alternativeName>
        <fullName evidence="1">Gly-tRNA(Ala) deacylase</fullName>
    </alternativeName>
</protein>
<comment type="function">
    <text evidence="1">An aminoacyl-tRNA editing enzyme that deacylates mischarged D-aminoacyl-tRNAs. Also deacylates mischarged glycyl-tRNA(Ala), protecting cells against glycine mischarging by AlaRS. Acts via tRNA-based rather than protein-based catalysis; rejects L-amino acids rather than detecting D-amino acids in the active site. By recycling D-aminoacyl-tRNA to D-amino acids and free tRNA molecules, this enzyme counteracts the toxicity associated with the formation of D-aminoacyl-tRNA entities in vivo and helps enforce protein L-homochirality.</text>
</comment>
<comment type="catalytic activity">
    <reaction evidence="1">
        <text>glycyl-tRNA(Ala) + H2O = tRNA(Ala) + glycine + H(+)</text>
        <dbReference type="Rhea" id="RHEA:53744"/>
        <dbReference type="Rhea" id="RHEA-COMP:9657"/>
        <dbReference type="Rhea" id="RHEA-COMP:13640"/>
        <dbReference type="ChEBI" id="CHEBI:15377"/>
        <dbReference type="ChEBI" id="CHEBI:15378"/>
        <dbReference type="ChEBI" id="CHEBI:57305"/>
        <dbReference type="ChEBI" id="CHEBI:78442"/>
        <dbReference type="ChEBI" id="CHEBI:78522"/>
        <dbReference type="EC" id="3.1.1.96"/>
    </reaction>
</comment>
<comment type="catalytic activity">
    <reaction evidence="1">
        <text>a D-aminoacyl-tRNA + H2O = a tRNA + a D-alpha-amino acid + H(+)</text>
        <dbReference type="Rhea" id="RHEA:13953"/>
        <dbReference type="Rhea" id="RHEA-COMP:10123"/>
        <dbReference type="Rhea" id="RHEA-COMP:10124"/>
        <dbReference type="ChEBI" id="CHEBI:15377"/>
        <dbReference type="ChEBI" id="CHEBI:15378"/>
        <dbReference type="ChEBI" id="CHEBI:59871"/>
        <dbReference type="ChEBI" id="CHEBI:78442"/>
        <dbReference type="ChEBI" id="CHEBI:79333"/>
        <dbReference type="EC" id="3.1.1.96"/>
    </reaction>
</comment>
<comment type="subunit">
    <text evidence="1">Homodimer.</text>
</comment>
<comment type="subcellular location">
    <subcellularLocation>
        <location evidence="1">Cytoplasm</location>
    </subcellularLocation>
</comment>
<comment type="domain">
    <text evidence="1">A Gly-cisPro motif from one monomer fits into the active site of the other monomer to allow specific chiral rejection of L-amino acids.</text>
</comment>
<comment type="similarity">
    <text evidence="1">Belongs to the DTD family.</text>
</comment>
<sequence length="147" mass="16330">MRALIQRVLEAKVEVDGQTTGEIKKGLLVFLGLGKEDTLEKGQKLIDKILKYRIFDDEQGKMGWNVSQANGGVLLVSQFTLMAQTQKGLRPDFGPAMPPSDAKALYEQLVEYTRSQFENVQTGIFAADMKVHLINDGPVTFNLEVEA</sequence>
<name>DTD_ACIBC</name>
<organism>
    <name type="scientific">Acinetobacter baumannii (strain ACICU)</name>
    <dbReference type="NCBI Taxonomy" id="405416"/>
    <lineage>
        <taxon>Bacteria</taxon>
        <taxon>Pseudomonadati</taxon>
        <taxon>Pseudomonadota</taxon>
        <taxon>Gammaproteobacteria</taxon>
        <taxon>Moraxellales</taxon>
        <taxon>Moraxellaceae</taxon>
        <taxon>Acinetobacter</taxon>
        <taxon>Acinetobacter calcoaceticus/baumannii complex</taxon>
    </lineage>
</organism>
<proteinExistence type="inferred from homology"/>
<feature type="chain" id="PRO_1000127480" description="D-aminoacyl-tRNA deacylase">
    <location>
        <begin position="1"/>
        <end position="147"/>
    </location>
</feature>
<feature type="short sequence motif" description="Gly-cisPro motif, important for rejection of L-amino acids" evidence="1">
    <location>
        <begin position="137"/>
        <end position="138"/>
    </location>
</feature>
<evidence type="ECO:0000255" key="1">
    <source>
        <dbReference type="HAMAP-Rule" id="MF_00518"/>
    </source>
</evidence>
<gene>
    <name evidence="1" type="primary">dtd</name>
    <name type="ordered locus">ACICU_03583</name>
</gene>
<reference key="1">
    <citation type="journal article" date="2008" name="Antimicrob. Agents Chemother.">
        <title>Whole-genome pyrosequencing of an epidemic multidrug-resistant Acinetobacter baumannii strain belonging to the European clone II group.</title>
        <authorList>
            <person name="Iacono M."/>
            <person name="Villa L."/>
            <person name="Fortini D."/>
            <person name="Bordoni R."/>
            <person name="Imperi F."/>
            <person name="Bonnal R.J."/>
            <person name="Sicheritz-Ponten T."/>
            <person name="De Bellis G."/>
            <person name="Visca P."/>
            <person name="Cassone A."/>
            <person name="Carattoli A."/>
        </authorList>
    </citation>
    <scope>NUCLEOTIDE SEQUENCE [LARGE SCALE GENOMIC DNA]</scope>
    <source>
        <strain>ACICU</strain>
    </source>
</reference>